<organism evidence="7">
    <name type="scientific">Drosophila melanogaster</name>
    <name type="common">Fruit fly</name>
    <dbReference type="NCBI Taxonomy" id="7227"/>
    <lineage>
        <taxon>Eukaryota</taxon>
        <taxon>Metazoa</taxon>
        <taxon>Ecdysozoa</taxon>
        <taxon>Arthropoda</taxon>
        <taxon>Hexapoda</taxon>
        <taxon>Insecta</taxon>
        <taxon>Pterygota</taxon>
        <taxon>Neoptera</taxon>
        <taxon>Endopterygota</taxon>
        <taxon>Diptera</taxon>
        <taxon>Brachycera</taxon>
        <taxon>Muscomorpha</taxon>
        <taxon>Ephydroidea</taxon>
        <taxon>Drosophilidae</taxon>
        <taxon>Drosophila</taxon>
        <taxon>Sophophora</taxon>
    </lineage>
</organism>
<reference evidence="9" key="1">
    <citation type="journal article" date="2000" name="Science">
        <title>The genome sequence of Drosophila melanogaster.</title>
        <authorList>
            <person name="Adams M.D."/>
            <person name="Celniker S.E."/>
            <person name="Holt R.A."/>
            <person name="Evans C.A."/>
            <person name="Gocayne J.D."/>
            <person name="Amanatides P.G."/>
            <person name="Scherer S.E."/>
            <person name="Li P.W."/>
            <person name="Hoskins R.A."/>
            <person name="Galle R.F."/>
            <person name="George R.A."/>
            <person name="Lewis S.E."/>
            <person name="Richards S."/>
            <person name="Ashburner M."/>
            <person name="Henderson S.N."/>
            <person name="Sutton G.G."/>
            <person name="Wortman J.R."/>
            <person name="Yandell M.D."/>
            <person name="Zhang Q."/>
            <person name="Chen L.X."/>
            <person name="Brandon R.C."/>
            <person name="Rogers Y.-H.C."/>
            <person name="Blazej R.G."/>
            <person name="Champe M."/>
            <person name="Pfeiffer B.D."/>
            <person name="Wan K.H."/>
            <person name="Doyle C."/>
            <person name="Baxter E.G."/>
            <person name="Helt G."/>
            <person name="Nelson C.R."/>
            <person name="Miklos G.L.G."/>
            <person name="Abril J.F."/>
            <person name="Agbayani A."/>
            <person name="An H.-J."/>
            <person name="Andrews-Pfannkoch C."/>
            <person name="Baldwin D."/>
            <person name="Ballew R.M."/>
            <person name="Basu A."/>
            <person name="Baxendale J."/>
            <person name="Bayraktaroglu L."/>
            <person name="Beasley E.M."/>
            <person name="Beeson K.Y."/>
            <person name="Benos P.V."/>
            <person name="Berman B.P."/>
            <person name="Bhandari D."/>
            <person name="Bolshakov S."/>
            <person name="Borkova D."/>
            <person name="Botchan M.R."/>
            <person name="Bouck J."/>
            <person name="Brokstein P."/>
            <person name="Brottier P."/>
            <person name="Burtis K.C."/>
            <person name="Busam D.A."/>
            <person name="Butler H."/>
            <person name="Cadieu E."/>
            <person name="Center A."/>
            <person name="Chandra I."/>
            <person name="Cherry J.M."/>
            <person name="Cawley S."/>
            <person name="Dahlke C."/>
            <person name="Davenport L.B."/>
            <person name="Davies P."/>
            <person name="de Pablos B."/>
            <person name="Delcher A."/>
            <person name="Deng Z."/>
            <person name="Mays A.D."/>
            <person name="Dew I."/>
            <person name="Dietz S.M."/>
            <person name="Dodson K."/>
            <person name="Doup L.E."/>
            <person name="Downes M."/>
            <person name="Dugan-Rocha S."/>
            <person name="Dunkov B.C."/>
            <person name="Dunn P."/>
            <person name="Durbin K.J."/>
            <person name="Evangelista C.C."/>
            <person name="Ferraz C."/>
            <person name="Ferriera S."/>
            <person name="Fleischmann W."/>
            <person name="Fosler C."/>
            <person name="Gabrielian A.E."/>
            <person name="Garg N.S."/>
            <person name="Gelbart W.M."/>
            <person name="Glasser K."/>
            <person name="Glodek A."/>
            <person name="Gong F."/>
            <person name="Gorrell J.H."/>
            <person name="Gu Z."/>
            <person name="Guan P."/>
            <person name="Harris M."/>
            <person name="Harris N.L."/>
            <person name="Harvey D.A."/>
            <person name="Heiman T.J."/>
            <person name="Hernandez J.R."/>
            <person name="Houck J."/>
            <person name="Hostin D."/>
            <person name="Houston K.A."/>
            <person name="Howland T.J."/>
            <person name="Wei M.-H."/>
            <person name="Ibegwam C."/>
            <person name="Jalali M."/>
            <person name="Kalush F."/>
            <person name="Karpen G.H."/>
            <person name="Ke Z."/>
            <person name="Kennison J.A."/>
            <person name="Ketchum K.A."/>
            <person name="Kimmel B.E."/>
            <person name="Kodira C.D."/>
            <person name="Kraft C.L."/>
            <person name="Kravitz S."/>
            <person name="Kulp D."/>
            <person name="Lai Z."/>
            <person name="Lasko P."/>
            <person name="Lei Y."/>
            <person name="Levitsky A.A."/>
            <person name="Li J.H."/>
            <person name="Li Z."/>
            <person name="Liang Y."/>
            <person name="Lin X."/>
            <person name="Liu X."/>
            <person name="Mattei B."/>
            <person name="McIntosh T.C."/>
            <person name="McLeod M.P."/>
            <person name="McPherson D."/>
            <person name="Merkulov G."/>
            <person name="Milshina N.V."/>
            <person name="Mobarry C."/>
            <person name="Morris J."/>
            <person name="Moshrefi A."/>
            <person name="Mount S.M."/>
            <person name="Moy M."/>
            <person name="Murphy B."/>
            <person name="Murphy L."/>
            <person name="Muzny D.M."/>
            <person name="Nelson D.L."/>
            <person name="Nelson D.R."/>
            <person name="Nelson K.A."/>
            <person name="Nixon K."/>
            <person name="Nusskern D.R."/>
            <person name="Pacleb J.M."/>
            <person name="Palazzolo M."/>
            <person name="Pittman G.S."/>
            <person name="Pan S."/>
            <person name="Pollard J."/>
            <person name="Puri V."/>
            <person name="Reese M.G."/>
            <person name="Reinert K."/>
            <person name="Remington K."/>
            <person name="Saunders R.D.C."/>
            <person name="Scheeler F."/>
            <person name="Shen H."/>
            <person name="Shue B.C."/>
            <person name="Siden-Kiamos I."/>
            <person name="Simpson M."/>
            <person name="Skupski M.P."/>
            <person name="Smith T.J."/>
            <person name="Spier E."/>
            <person name="Spradling A.C."/>
            <person name="Stapleton M."/>
            <person name="Strong R."/>
            <person name="Sun E."/>
            <person name="Svirskas R."/>
            <person name="Tector C."/>
            <person name="Turner R."/>
            <person name="Venter E."/>
            <person name="Wang A.H."/>
            <person name="Wang X."/>
            <person name="Wang Z.-Y."/>
            <person name="Wassarman D.A."/>
            <person name="Weinstock G.M."/>
            <person name="Weissenbach J."/>
            <person name="Williams S.M."/>
            <person name="Woodage T."/>
            <person name="Worley K.C."/>
            <person name="Wu D."/>
            <person name="Yang S."/>
            <person name="Yao Q.A."/>
            <person name="Ye J."/>
            <person name="Yeh R.-F."/>
            <person name="Zaveri J.S."/>
            <person name="Zhan M."/>
            <person name="Zhang G."/>
            <person name="Zhao Q."/>
            <person name="Zheng L."/>
            <person name="Zheng X.H."/>
            <person name="Zhong F.N."/>
            <person name="Zhong W."/>
            <person name="Zhou X."/>
            <person name="Zhu S.C."/>
            <person name="Zhu X."/>
            <person name="Smith H.O."/>
            <person name="Gibbs R.A."/>
            <person name="Myers E.W."/>
            <person name="Rubin G.M."/>
            <person name="Venter J.C."/>
        </authorList>
    </citation>
    <scope>NUCLEOTIDE SEQUENCE [LARGE SCALE GENOMIC DNA]</scope>
    <source>
        <strain evidence="9">Berkeley</strain>
    </source>
</reference>
<reference evidence="9" key="2">
    <citation type="journal article" date="2002" name="Genome Biol.">
        <title>Annotation of the Drosophila melanogaster euchromatic genome: a systematic review.</title>
        <authorList>
            <person name="Misra S."/>
            <person name="Crosby M.A."/>
            <person name="Mungall C.J."/>
            <person name="Matthews B.B."/>
            <person name="Campbell K.S."/>
            <person name="Hradecky P."/>
            <person name="Huang Y."/>
            <person name="Kaminker J.S."/>
            <person name="Millburn G.H."/>
            <person name="Prochnik S.E."/>
            <person name="Smith C.D."/>
            <person name="Tupy J.L."/>
            <person name="Whitfield E.J."/>
            <person name="Bayraktaroglu L."/>
            <person name="Berman B.P."/>
            <person name="Bettencourt B.R."/>
            <person name="Celniker S.E."/>
            <person name="de Grey A.D.N.J."/>
            <person name="Drysdale R.A."/>
            <person name="Harris N.L."/>
            <person name="Richter J."/>
            <person name="Russo S."/>
            <person name="Schroeder A.J."/>
            <person name="Shu S.Q."/>
            <person name="Stapleton M."/>
            <person name="Yamada C."/>
            <person name="Ashburner M."/>
            <person name="Gelbart W.M."/>
            <person name="Rubin G.M."/>
            <person name="Lewis S.E."/>
        </authorList>
    </citation>
    <scope>GENOME REANNOTATION</scope>
    <source>
        <strain evidence="9">Berkeley</strain>
    </source>
</reference>
<reference evidence="7" key="3">
    <citation type="journal article" date="2002" name="Genome Biol.">
        <title>A Drosophila full-length cDNA resource.</title>
        <authorList>
            <person name="Stapleton M."/>
            <person name="Carlson J.W."/>
            <person name="Brokstein P."/>
            <person name="Yu C."/>
            <person name="Champe M."/>
            <person name="George R.A."/>
            <person name="Guarin H."/>
            <person name="Kronmiller B."/>
            <person name="Pacleb J.M."/>
            <person name="Park S."/>
            <person name="Wan K.H."/>
            <person name="Rubin G.M."/>
            <person name="Celniker S.E."/>
        </authorList>
    </citation>
    <scope>NUCLEOTIDE SEQUENCE [LARGE SCALE MRNA]</scope>
    <source>
        <strain evidence="7">Berkeley</strain>
        <tissue evidence="7">Head</tissue>
    </source>
</reference>
<reference evidence="5" key="4">
    <citation type="journal article" date="2010" name="Curr. Biol.">
        <title>Localization and activation of the Drosophila protease easter require the ER-resident saposin-like protein seele.</title>
        <authorList>
            <person name="Stein D."/>
            <person name="Charatsi I."/>
            <person name="Cho Y.S."/>
            <person name="Zhang Z."/>
            <person name="Nguyen J."/>
            <person name="DeLotto R."/>
            <person name="Luschnig S."/>
            <person name="Moussian B."/>
        </authorList>
    </citation>
    <scope>FUNCTION</scope>
    <scope>SUBCELLULAR LOCATION</scope>
    <scope>DEVELOPMENTAL STAGE</scope>
    <scope>DISRUPTION PHENOTYPE</scope>
</reference>
<accession>Q7JXF7</accession>
<protein>
    <recommendedName>
        <fullName evidence="6">Protein seele</fullName>
    </recommendedName>
</protein>
<comment type="function">
    <text evidence="4">Involved in embryonic dorsal-ventral patterning which is generated by a series of serine protease processing events where gd processes snk which cleaves ea which then processes spz into the activating ligand for the Toll receptor. Required during this process for the secretion of ea from the developing embryo into the perivitelline space and for ea processing.</text>
</comment>
<comment type="subcellular location">
    <subcellularLocation>
        <location evidence="4">Endoplasmic reticulum</location>
    </subcellularLocation>
</comment>
<comment type="developmental stage">
    <text evidence="4">Expressed in blastoderm embryos (at protein level). Abundantly expressed in late-stage embryos including in the developing salivary glands (at protein level).</text>
</comment>
<comment type="disruption phenotype">
    <text evidence="4">Formation of embryos with altered dorsal-ventral patterning, dramatically decreased levels of ea in the perivitelline space and reduced processing of ea.</text>
</comment>
<comment type="similarity">
    <text evidence="5">Belongs to the canopy family.</text>
</comment>
<gene>
    <name evidence="8" type="primary">sel</name>
    <name evidence="8" type="ORF">CG12918</name>
</gene>
<dbReference type="EMBL" id="AE013599">
    <property type="protein sequence ID" value="AAF58856.1"/>
    <property type="molecule type" value="Genomic_DNA"/>
</dbReference>
<dbReference type="EMBL" id="AY094698">
    <property type="protein sequence ID" value="AAM11051.1"/>
    <property type="molecule type" value="mRNA"/>
</dbReference>
<dbReference type="RefSeq" id="NP_610547.1">
    <property type="nucleotide sequence ID" value="NM_136703.5"/>
</dbReference>
<dbReference type="FunCoup" id="Q7JXF7">
    <property type="interactions" value="1456"/>
</dbReference>
<dbReference type="IntAct" id="Q7JXF7">
    <property type="interactions" value="39"/>
</dbReference>
<dbReference type="STRING" id="7227.FBpp0087519"/>
<dbReference type="PaxDb" id="7227-FBpp0087519"/>
<dbReference type="DNASU" id="36046"/>
<dbReference type="EnsemblMetazoa" id="FBtr0088433">
    <property type="protein sequence ID" value="FBpp0087519"/>
    <property type="gene ID" value="FBgn0263260"/>
</dbReference>
<dbReference type="GeneID" id="36046"/>
<dbReference type="KEGG" id="dme:Dmel_CG12918"/>
<dbReference type="UCSC" id="CG12918-RA">
    <property type="organism name" value="d. melanogaster"/>
</dbReference>
<dbReference type="AGR" id="FB:FBgn0263260"/>
<dbReference type="CTD" id="36046"/>
<dbReference type="FlyBase" id="FBgn0263260">
    <property type="gene designation" value="sel"/>
</dbReference>
<dbReference type="VEuPathDB" id="VectorBase:FBgn0263260"/>
<dbReference type="eggNOG" id="KOG3782">
    <property type="taxonomic scope" value="Eukaryota"/>
</dbReference>
<dbReference type="GeneTree" id="ENSGT00940000168977"/>
<dbReference type="HOGENOM" id="CLU_095726_0_0_1"/>
<dbReference type="InParanoid" id="Q7JXF7"/>
<dbReference type="OMA" id="CEQMKEY"/>
<dbReference type="OrthoDB" id="192915at2759"/>
<dbReference type="PhylomeDB" id="Q7JXF7"/>
<dbReference type="BioGRID-ORCS" id="36046">
    <property type="hits" value="0 hits in 3 CRISPR screens"/>
</dbReference>
<dbReference type="GenomeRNAi" id="36046"/>
<dbReference type="PRO" id="PR:Q7JXF7"/>
<dbReference type="Proteomes" id="UP000000803">
    <property type="component" value="Chromosome 2R"/>
</dbReference>
<dbReference type="Bgee" id="FBgn0263260">
    <property type="expression patterns" value="Expressed in spermathecum and 133 other cell types or tissues"/>
</dbReference>
<dbReference type="GO" id="GO:0012505">
    <property type="term" value="C:endomembrane system"/>
    <property type="evidence" value="ECO:0007005"/>
    <property type="project" value="FlyBase"/>
</dbReference>
<dbReference type="GO" id="GO:0005783">
    <property type="term" value="C:endoplasmic reticulum"/>
    <property type="evidence" value="ECO:0000314"/>
    <property type="project" value="FlyBase"/>
</dbReference>
<dbReference type="GO" id="GO:0051087">
    <property type="term" value="F:protein-folding chaperone binding"/>
    <property type="evidence" value="ECO:0000250"/>
    <property type="project" value="FlyBase"/>
</dbReference>
<dbReference type="GO" id="GO:0061077">
    <property type="term" value="P:chaperone-mediated protein folding"/>
    <property type="evidence" value="ECO:0000250"/>
    <property type="project" value="FlyBase"/>
</dbReference>
<dbReference type="GO" id="GO:0007311">
    <property type="term" value="P:maternal specification of dorsal/ventral axis, oocyte, germ-line encoded"/>
    <property type="evidence" value="ECO:0007001"/>
    <property type="project" value="FlyBase"/>
</dbReference>
<dbReference type="GO" id="GO:0009951">
    <property type="term" value="P:polarity specification of dorsal/ventral axis"/>
    <property type="evidence" value="ECO:0000315"/>
    <property type="project" value="FlyBase"/>
</dbReference>
<dbReference type="GO" id="GO:0070613">
    <property type="term" value="P:regulation of protein processing"/>
    <property type="evidence" value="ECO:0000315"/>
    <property type="project" value="FlyBase"/>
</dbReference>
<dbReference type="GO" id="GO:0050708">
    <property type="term" value="P:regulation of protein secretion"/>
    <property type="evidence" value="ECO:0000315"/>
    <property type="project" value="FlyBase"/>
</dbReference>
<dbReference type="InterPro" id="IPR042415">
    <property type="entry name" value="CNPY"/>
</dbReference>
<dbReference type="InterPro" id="IPR021852">
    <property type="entry name" value="DUF3456"/>
</dbReference>
<dbReference type="PANTHER" id="PTHR13341">
    <property type="entry name" value="MIR-INTERACTING SAPOSIN-LIKE PROTEIN"/>
    <property type="match status" value="1"/>
</dbReference>
<dbReference type="PANTHER" id="PTHR13341:SF2">
    <property type="entry name" value="PROTEIN SEELE"/>
    <property type="match status" value="1"/>
</dbReference>
<dbReference type="Pfam" id="PF11938">
    <property type="entry name" value="DUF3456"/>
    <property type="match status" value="1"/>
</dbReference>
<dbReference type="PROSITE" id="PS00014">
    <property type="entry name" value="ER_TARGET"/>
    <property type="match status" value="1"/>
</dbReference>
<sequence>MLTKALILFGLLALAQGYSFTSREVKCHVCKAVVTELEEAIAKEDPHKMADVSGFRLDAQGNSISKKVRLVKSEMFLTELMEKICEKMDDYLKATYKSNGKFTLLKMIINGQMNPDSSLVDFVQDGDLNKSLGHFCNEVLEDNDEIFVKAFQAEELGNDLDIKICSEQASYCDESPVQEEYDFDGKEEL</sequence>
<evidence type="ECO:0000255" key="1"/>
<evidence type="ECO:0000255" key="2">
    <source>
        <dbReference type="PROSITE-ProRule" id="PRU00415"/>
    </source>
</evidence>
<evidence type="ECO:0000255" key="3">
    <source>
        <dbReference type="PROSITE-ProRule" id="PRU10138"/>
    </source>
</evidence>
<evidence type="ECO:0000269" key="4">
    <source>
    </source>
</evidence>
<evidence type="ECO:0000305" key="5"/>
<evidence type="ECO:0000312" key="6">
    <source>
        <dbReference type="EMBL" id="AAF58856.1"/>
    </source>
</evidence>
<evidence type="ECO:0000312" key="7">
    <source>
        <dbReference type="EMBL" id="AAM11051.1"/>
    </source>
</evidence>
<evidence type="ECO:0000312" key="8">
    <source>
        <dbReference type="FlyBase" id="FBgn0263260"/>
    </source>
</evidence>
<evidence type="ECO:0000312" key="9">
    <source>
        <dbReference type="Proteomes" id="UP000000803"/>
    </source>
</evidence>
<feature type="signal peptide" evidence="1">
    <location>
        <begin position="1"/>
        <end position="17"/>
    </location>
</feature>
<feature type="chain" id="PRO_5007711062" description="Protein seele">
    <location>
        <begin position="18"/>
        <end position="189"/>
    </location>
</feature>
<feature type="domain" description="Saposin B-type" evidence="2">
    <location>
        <begin position="23"/>
        <end position="176"/>
    </location>
</feature>
<feature type="short sequence motif" description="Prevents secretion from ER" evidence="3">
    <location>
        <begin position="186"/>
        <end position="189"/>
    </location>
</feature>
<feature type="disulfide bond" evidence="2">
    <location>
        <begin position="27"/>
        <end position="172"/>
    </location>
</feature>
<feature type="disulfide bond" evidence="2">
    <location>
        <begin position="30"/>
        <end position="165"/>
    </location>
</feature>
<feature type="disulfide bond" evidence="2">
    <location>
        <begin position="85"/>
        <end position="136"/>
    </location>
</feature>
<proteinExistence type="evidence at protein level"/>
<name>SEELE_DROME</name>
<keyword id="KW-0217">Developmental protein</keyword>
<keyword id="KW-1015">Disulfide bond</keyword>
<keyword id="KW-0256">Endoplasmic reticulum</keyword>
<keyword id="KW-1185">Reference proteome</keyword>
<keyword id="KW-0732">Signal</keyword>